<reference key="1">
    <citation type="submission" date="2007-03" db="EMBL/GenBank/DDBJ databases">
        <title>Sequencing analysis of Nasturtium officinale chloroplast DNA.</title>
        <authorList>
            <person name="Hosouchi T."/>
            <person name="Tsuruoka H."/>
            <person name="Kotani H."/>
        </authorList>
    </citation>
    <scope>NUCLEOTIDE SEQUENCE [LARGE SCALE GENOMIC DNA]</scope>
</reference>
<sequence>MIEVFLFGIVLGLIPITLAGLFVTAYLQYRRGDQLDF</sequence>
<feature type="chain" id="PRO_0000355400" description="Cytochrome b6-f complex subunit 5">
    <location>
        <begin position="1"/>
        <end position="37"/>
    </location>
</feature>
<feature type="transmembrane region" description="Helical" evidence="1">
    <location>
        <begin position="5"/>
        <end position="25"/>
    </location>
</feature>
<name>PETG_NASOF</name>
<evidence type="ECO:0000255" key="1">
    <source>
        <dbReference type="HAMAP-Rule" id="MF_00432"/>
    </source>
</evidence>
<comment type="function">
    <text evidence="1">Component of the cytochrome b6-f complex, which mediates electron transfer between photosystem II (PSII) and photosystem I (PSI), cyclic electron flow around PSI, and state transitions. PetG is required for either the stability or assembly of the cytochrome b6-f complex.</text>
</comment>
<comment type="subunit">
    <text evidence="1">The 4 large subunits of the cytochrome b6-f complex are cytochrome b6, subunit IV (17 kDa polypeptide, PetD), cytochrome f and the Rieske protein, while the 4 small subunits are PetG, PetL, PetM and PetN. The complex functions as a dimer.</text>
</comment>
<comment type="subcellular location">
    <subcellularLocation>
        <location evidence="1">Plastid</location>
        <location evidence="1">Chloroplast thylakoid membrane</location>
        <topology evidence="1">Single-pass membrane protein</topology>
    </subcellularLocation>
</comment>
<comment type="similarity">
    <text evidence="1">Belongs to the PetG family.</text>
</comment>
<dbReference type="EMBL" id="AP009376">
    <property type="protein sequence ID" value="BAF50657.1"/>
    <property type="molecule type" value="Genomic_DNA"/>
</dbReference>
<dbReference type="RefSeq" id="YP_001123833.1">
    <property type="nucleotide sequence ID" value="NC_009275.1"/>
</dbReference>
<dbReference type="SMR" id="A4QLV2"/>
<dbReference type="GeneID" id="4962209"/>
<dbReference type="GO" id="GO:0009535">
    <property type="term" value="C:chloroplast thylakoid membrane"/>
    <property type="evidence" value="ECO:0007669"/>
    <property type="project" value="UniProtKB-SubCell"/>
</dbReference>
<dbReference type="GO" id="GO:0009512">
    <property type="term" value="C:cytochrome b6f complex"/>
    <property type="evidence" value="ECO:0007669"/>
    <property type="project" value="InterPro"/>
</dbReference>
<dbReference type="GO" id="GO:0045158">
    <property type="term" value="F:electron transporter, transferring electrons within cytochrome b6/f complex of photosystem II activity"/>
    <property type="evidence" value="ECO:0007669"/>
    <property type="project" value="UniProtKB-UniRule"/>
</dbReference>
<dbReference type="GO" id="GO:0017004">
    <property type="term" value="P:cytochrome complex assembly"/>
    <property type="evidence" value="ECO:0007669"/>
    <property type="project" value="UniProtKB-UniRule"/>
</dbReference>
<dbReference type="GO" id="GO:0015979">
    <property type="term" value="P:photosynthesis"/>
    <property type="evidence" value="ECO:0007669"/>
    <property type="project" value="UniProtKB-KW"/>
</dbReference>
<dbReference type="HAMAP" id="MF_00432">
    <property type="entry name" value="Cytb6_f_PetG"/>
    <property type="match status" value="1"/>
</dbReference>
<dbReference type="InterPro" id="IPR003683">
    <property type="entry name" value="Cyt_6/f_cplx_su5"/>
</dbReference>
<dbReference type="InterPro" id="IPR036099">
    <property type="entry name" value="Cyt_6/f_cplx_su5_sf"/>
</dbReference>
<dbReference type="NCBIfam" id="NF001907">
    <property type="entry name" value="PRK00665.1"/>
    <property type="match status" value="1"/>
</dbReference>
<dbReference type="Pfam" id="PF02529">
    <property type="entry name" value="PetG"/>
    <property type="match status" value="1"/>
</dbReference>
<dbReference type="PIRSF" id="PIRSF000034">
    <property type="entry name" value="Cyt_b6-f_V"/>
    <property type="match status" value="1"/>
</dbReference>
<dbReference type="SUPFAM" id="SSF103446">
    <property type="entry name" value="PetG subunit of the cytochrome b6f complex"/>
    <property type="match status" value="1"/>
</dbReference>
<accession>A4QLV2</accession>
<protein>
    <recommendedName>
        <fullName evidence="1">Cytochrome b6-f complex subunit 5</fullName>
    </recommendedName>
    <alternativeName>
        <fullName evidence="1">Cytochrome b6-f complex subunit PetG</fullName>
    </alternativeName>
    <alternativeName>
        <fullName evidence="1">Cytochrome b6-f complex subunit V</fullName>
    </alternativeName>
</protein>
<gene>
    <name evidence="1" type="primary">petG</name>
</gene>
<proteinExistence type="inferred from homology"/>
<keyword id="KW-0150">Chloroplast</keyword>
<keyword id="KW-0249">Electron transport</keyword>
<keyword id="KW-0472">Membrane</keyword>
<keyword id="KW-0602">Photosynthesis</keyword>
<keyword id="KW-0934">Plastid</keyword>
<keyword id="KW-0793">Thylakoid</keyword>
<keyword id="KW-0812">Transmembrane</keyword>
<keyword id="KW-1133">Transmembrane helix</keyword>
<keyword id="KW-0813">Transport</keyword>
<organism>
    <name type="scientific">Nasturtium officinale</name>
    <name type="common">Watercress</name>
    <name type="synonym">Rorippa nasturtium-aquaticum</name>
    <dbReference type="NCBI Taxonomy" id="65948"/>
    <lineage>
        <taxon>Eukaryota</taxon>
        <taxon>Viridiplantae</taxon>
        <taxon>Streptophyta</taxon>
        <taxon>Embryophyta</taxon>
        <taxon>Tracheophyta</taxon>
        <taxon>Spermatophyta</taxon>
        <taxon>Magnoliopsida</taxon>
        <taxon>eudicotyledons</taxon>
        <taxon>Gunneridae</taxon>
        <taxon>Pentapetalae</taxon>
        <taxon>rosids</taxon>
        <taxon>malvids</taxon>
        <taxon>Brassicales</taxon>
        <taxon>Brassicaceae</taxon>
        <taxon>Cardamineae</taxon>
        <taxon>Nasturtium</taxon>
    </lineage>
</organism>
<geneLocation type="chloroplast"/>